<gene>
    <name evidence="1" type="primary">rlmF</name>
    <name type="ordered locus">Spea_4146</name>
</gene>
<keyword id="KW-0963">Cytoplasm</keyword>
<keyword id="KW-0489">Methyltransferase</keyword>
<keyword id="KW-1185">Reference proteome</keyword>
<keyword id="KW-0698">rRNA processing</keyword>
<keyword id="KW-0949">S-adenosyl-L-methionine</keyword>
<keyword id="KW-0808">Transferase</keyword>
<reference key="1">
    <citation type="submission" date="2007-10" db="EMBL/GenBank/DDBJ databases">
        <title>Complete sequence of Shewanella pealeana ATCC 700345.</title>
        <authorList>
            <consortium name="US DOE Joint Genome Institute"/>
            <person name="Copeland A."/>
            <person name="Lucas S."/>
            <person name="Lapidus A."/>
            <person name="Barry K."/>
            <person name="Glavina del Rio T."/>
            <person name="Dalin E."/>
            <person name="Tice H."/>
            <person name="Pitluck S."/>
            <person name="Chertkov O."/>
            <person name="Brettin T."/>
            <person name="Bruce D."/>
            <person name="Detter J.C."/>
            <person name="Han C."/>
            <person name="Schmutz J."/>
            <person name="Larimer F."/>
            <person name="Land M."/>
            <person name="Hauser L."/>
            <person name="Kyrpides N."/>
            <person name="Kim E."/>
            <person name="Zhao J.-S.Z."/>
            <person name="Manno D."/>
            <person name="Hawari J."/>
            <person name="Richardson P."/>
        </authorList>
    </citation>
    <scope>NUCLEOTIDE SEQUENCE [LARGE SCALE GENOMIC DNA]</scope>
    <source>
        <strain>ATCC 700345 / ANG-SQ1</strain>
    </source>
</reference>
<protein>
    <recommendedName>
        <fullName evidence="1">Ribosomal RNA large subunit methyltransferase F</fullName>
        <ecNumber evidence="1">2.1.1.181</ecNumber>
    </recommendedName>
    <alternativeName>
        <fullName evidence="1">23S rRNA mA1618 methyltransferase</fullName>
    </alternativeName>
    <alternativeName>
        <fullName evidence="1">rRNA adenine N-6-methyltransferase</fullName>
    </alternativeName>
</protein>
<sequence>MSHKTKSTTQERKAGKSSAPQRQVVSKSSLQKKVSKPTATAKLQKSKALHPRNAHNNGYDFAALVTAFPKLKAFVKPNPYGNLSIDFADPVAVKMLNAALLKFHYGVGHWDIPDGFLCPPIPGRADYIHHVADLLAVKKSSKKRIPKGPKVRVLDIGTGANVIYPLLGIQSYGWDFVGSDVDPLSIANAQQIFAGNSDIANKFSSRLQADSKHVFHGVIEANERFDLTLCNPPFHASLAEASEGTARKLKNLAANRAKSSQVMSPQVQPSGKVKPATDKNHGVLNFGGQKAELWCEGGELQFLRTMIEESHDFASQCLWFTTLVSKKENLNPAKALLAKIKAEEVKEIEMHQGNKITRVLAWTFLKPEQRELWVQYRDAQ</sequence>
<feature type="chain" id="PRO_0000349959" description="Ribosomal RNA large subunit methyltransferase F">
    <location>
        <begin position="1"/>
        <end position="380"/>
    </location>
</feature>
<feature type="region of interest" description="Disordered" evidence="2">
    <location>
        <begin position="1"/>
        <end position="54"/>
    </location>
</feature>
<feature type="region of interest" description="Disordered" evidence="2">
    <location>
        <begin position="260"/>
        <end position="279"/>
    </location>
</feature>
<feature type="compositionally biased region" description="Low complexity" evidence="2">
    <location>
        <begin position="21"/>
        <end position="32"/>
    </location>
</feature>
<feature type="compositionally biased region" description="Basic residues" evidence="2">
    <location>
        <begin position="44"/>
        <end position="53"/>
    </location>
</feature>
<feature type="compositionally biased region" description="Low complexity" evidence="2">
    <location>
        <begin position="260"/>
        <end position="270"/>
    </location>
</feature>
<proteinExistence type="inferred from homology"/>
<accession>A8HA69</accession>
<comment type="function">
    <text evidence="1">Specifically methylates the adenine in position 1618 of 23S rRNA.</text>
</comment>
<comment type="catalytic activity">
    <reaction evidence="1">
        <text>adenosine(1618) in 23S rRNA + S-adenosyl-L-methionine = N(6)-methyladenosine(1618) in 23S rRNA + S-adenosyl-L-homocysteine + H(+)</text>
        <dbReference type="Rhea" id="RHEA:16497"/>
        <dbReference type="Rhea" id="RHEA-COMP:10229"/>
        <dbReference type="Rhea" id="RHEA-COMP:10231"/>
        <dbReference type="ChEBI" id="CHEBI:15378"/>
        <dbReference type="ChEBI" id="CHEBI:57856"/>
        <dbReference type="ChEBI" id="CHEBI:59789"/>
        <dbReference type="ChEBI" id="CHEBI:74411"/>
        <dbReference type="ChEBI" id="CHEBI:74449"/>
        <dbReference type="EC" id="2.1.1.181"/>
    </reaction>
</comment>
<comment type="subcellular location">
    <subcellularLocation>
        <location evidence="1">Cytoplasm</location>
    </subcellularLocation>
</comment>
<comment type="similarity">
    <text evidence="1">Belongs to the methyltransferase superfamily. METTL16/RlmF family.</text>
</comment>
<organism>
    <name type="scientific">Shewanella pealeana (strain ATCC 700345 / ANG-SQ1)</name>
    <dbReference type="NCBI Taxonomy" id="398579"/>
    <lineage>
        <taxon>Bacteria</taxon>
        <taxon>Pseudomonadati</taxon>
        <taxon>Pseudomonadota</taxon>
        <taxon>Gammaproteobacteria</taxon>
        <taxon>Alteromonadales</taxon>
        <taxon>Shewanellaceae</taxon>
        <taxon>Shewanella</taxon>
    </lineage>
</organism>
<name>RLMF_SHEPA</name>
<evidence type="ECO:0000255" key="1">
    <source>
        <dbReference type="HAMAP-Rule" id="MF_01848"/>
    </source>
</evidence>
<evidence type="ECO:0000256" key="2">
    <source>
        <dbReference type="SAM" id="MobiDB-lite"/>
    </source>
</evidence>
<dbReference type="EC" id="2.1.1.181" evidence="1"/>
<dbReference type="EMBL" id="CP000851">
    <property type="protein sequence ID" value="ABV89456.1"/>
    <property type="molecule type" value="Genomic_DNA"/>
</dbReference>
<dbReference type="RefSeq" id="WP_012157334.1">
    <property type="nucleotide sequence ID" value="NC_009901.1"/>
</dbReference>
<dbReference type="SMR" id="A8HA69"/>
<dbReference type="STRING" id="398579.Spea_4146"/>
<dbReference type="KEGG" id="spl:Spea_4146"/>
<dbReference type="eggNOG" id="COG3129">
    <property type="taxonomic scope" value="Bacteria"/>
</dbReference>
<dbReference type="HOGENOM" id="CLU_027534_3_0_6"/>
<dbReference type="OrthoDB" id="1115728at2"/>
<dbReference type="Proteomes" id="UP000002608">
    <property type="component" value="Chromosome"/>
</dbReference>
<dbReference type="GO" id="GO:0005737">
    <property type="term" value="C:cytoplasm"/>
    <property type="evidence" value="ECO:0007669"/>
    <property type="project" value="UniProtKB-SubCell"/>
</dbReference>
<dbReference type="GO" id="GO:0052907">
    <property type="term" value="F:23S rRNA (adenine(1618)-N(6))-methyltransferase activity"/>
    <property type="evidence" value="ECO:0007669"/>
    <property type="project" value="UniProtKB-EC"/>
</dbReference>
<dbReference type="GO" id="GO:0070475">
    <property type="term" value="P:rRNA base methylation"/>
    <property type="evidence" value="ECO:0007669"/>
    <property type="project" value="TreeGrafter"/>
</dbReference>
<dbReference type="CDD" id="cd02440">
    <property type="entry name" value="AdoMet_MTases"/>
    <property type="match status" value="1"/>
</dbReference>
<dbReference type="Gene3D" id="3.40.50.150">
    <property type="entry name" value="Vaccinia Virus protein VP39"/>
    <property type="match status" value="1"/>
</dbReference>
<dbReference type="HAMAP" id="MF_01848">
    <property type="entry name" value="23SrRNA_methyltr_F"/>
    <property type="match status" value="1"/>
</dbReference>
<dbReference type="InterPro" id="IPR010286">
    <property type="entry name" value="METTL16/RlmF"/>
</dbReference>
<dbReference type="InterPro" id="IPR016909">
    <property type="entry name" value="rRNA_lsu_MeTfrase_F"/>
</dbReference>
<dbReference type="InterPro" id="IPR029063">
    <property type="entry name" value="SAM-dependent_MTases_sf"/>
</dbReference>
<dbReference type="NCBIfam" id="NF008725">
    <property type="entry name" value="PRK11727.1"/>
    <property type="match status" value="1"/>
</dbReference>
<dbReference type="PANTHER" id="PTHR13393:SF0">
    <property type="entry name" value="RNA N6-ADENOSINE-METHYLTRANSFERASE METTL16"/>
    <property type="match status" value="1"/>
</dbReference>
<dbReference type="PANTHER" id="PTHR13393">
    <property type="entry name" value="SAM-DEPENDENT METHYLTRANSFERASE"/>
    <property type="match status" value="1"/>
</dbReference>
<dbReference type="Pfam" id="PF05971">
    <property type="entry name" value="Methyltransf_10"/>
    <property type="match status" value="1"/>
</dbReference>
<dbReference type="PIRSF" id="PIRSF029038">
    <property type="entry name" value="Mtase_YbiN_prd"/>
    <property type="match status" value="1"/>
</dbReference>
<dbReference type="SUPFAM" id="SSF53335">
    <property type="entry name" value="S-adenosyl-L-methionine-dependent methyltransferases"/>
    <property type="match status" value="1"/>
</dbReference>